<gene>
    <name evidence="1" type="primary">trpR</name>
    <name type="ordered locus">plu0557</name>
</gene>
<name>TRPR_PHOLL</name>
<comment type="function">
    <text evidence="1">This protein is an aporepressor. When complexed with L-tryptophan it binds the operator region of the trp operon (5'-ACTAGT-'3') and prevents the initiation of transcription. The complex also regulates trp repressor biosynthesis by binding to its regulatory region.</text>
</comment>
<comment type="subunit">
    <text evidence="1">Homodimer.</text>
</comment>
<comment type="subcellular location">
    <subcellularLocation>
        <location evidence="1">Cytoplasm</location>
    </subcellularLocation>
</comment>
<comment type="similarity">
    <text evidence="1">Belongs to the TrpR family.</text>
</comment>
<proteinExistence type="inferred from homology"/>
<evidence type="ECO:0000255" key="1">
    <source>
        <dbReference type="HAMAP-Rule" id="MF_00475"/>
    </source>
</evidence>
<sequence length="106" mass="11997">MTTNHLTDPALSPQDHEDWQCFVTLLQQAFAENLQHPILQLLLTPDERTALATRVRIIKELMSGKMSQRELKNELGVGIATITRGSNSLKFASNDVKAWLEQQLLK</sequence>
<reference key="1">
    <citation type="journal article" date="2003" name="Nat. Biotechnol.">
        <title>The genome sequence of the entomopathogenic bacterium Photorhabdus luminescens.</title>
        <authorList>
            <person name="Duchaud E."/>
            <person name="Rusniok C."/>
            <person name="Frangeul L."/>
            <person name="Buchrieser C."/>
            <person name="Givaudan A."/>
            <person name="Taourit S."/>
            <person name="Bocs S."/>
            <person name="Boursaux-Eude C."/>
            <person name="Chandler M."/>
            <person name="Charles J.-F."/>
            <person name="Dassa E."/>
            <person name="Derose R."/>
            <person name="Derzelle S."/>
            <person name="Freyssinet G."/>
            <person name="Gaudriault S."/>
            <person name="Medigue C."/>
            <person name="Lanois A."/>
            <person name="Powell K."/>
            <person name="Siguier P."/>
            <person name="Vincent R."/>
            <person name="Wingate V."/>
            <person name="Zouine M."/>
            <person name="Glaser P."/>
            <person name="Boemare N."/>
            <person name="Danchin A."/>
            <person name="Kunst F."/>
        </authorList>
    </citation>
    <scope>NUCLEOTIDE SEQUENCE [LARGE SCALE GENOMIC DNA]</scope>
    <source>
        <strain>DSM 15139 / CIP 105565 / TT01</strain>
    </source>
</reference>
<organism>
    <name type="scientific">Photorhabdus laumondii subsp. laumondii (strain DSM 15139 / CIP 105565 / TT01)</name>
    <name type="common">Photorhabdus luminescens subsp. laumondii</name>
    <dbReference type="NCBI Taxonomy" id="243265"/>
    <lineage>
        <taxon>Bacteria</taxon>
        <taxon>Pseudomonadati</taxon>
        <taxon>Pseudomonadota</taxon>
        <taxon>Gammaproteobacteria</taxon>
        <taxon>Enterobacterales</taxon>
        <taxon>Morganellaceae</taxon>
        <taxon>Photorhabdus</taxon>
    </lineage>
</organism>
<protein>
    <recommendedName>
        <fullName evidence="1">Trp operon repressor</fullName>
    </recommendedName>
</protein>
<feature type="chain" id="PRO_0000196500" description="Trp operon repressor">
    <location>
        <begin position="1"/>
        <end position="106"/>
    </location>
</feature>
<feature type="DNA-binding region" evidence="1">
    <location>
        <begin position="68"/>
        <end position="91"/>
    </location>
</feature>
<keyword id="KW-0963">Cytoplasm</keyword>
<keyword id="KW-0238">DNA-binding</keyword>
<keyword id="KW-1185">Reference proteome</keyword>
<keyword id="KW-0678">Repressor</keyword>
<keyword id="KW-0804">Transcription</keyword>
<keyword id="KW-0805">Transcription regulation</keyword>
<accession>Q7N902</accession>
<dbReference type="EMBL" id="BX571860">
    <property type="protein sequence ID" value="CAE12852.1"/>
    <property type="molecule type" value="Genomic_DNA"/>
</dbReference>
<dbReference type="RefSeq" id="WP_011144939.1">
    <property type="nucleotide sequence ID" value="NC_005126.1"/>
</dbReference>
<dbReference type="SMR" id="Q7N902"/>
<dbReference type="STRING" id="243265.plu0557"/>
<dbReference type="GeneID" id="88807799"/>
<dbReference type="KEGG" id="plu:plu0557"/>
<dbReference type="eggNOG" id="COG2973">
    <property type="taxonomic scope" value="Bacteria"/>
</dbReference>
<dbReference type="HOGENOM" id="CLU_147939_0_0_6"/>
<dbReference type="OrthoDB" id="5704033at2"/>
<dbReference type="Proteomes" id="UP000002514">
    <property type="component" value="Chromosome"/>
</dbReference>
<dbReference type="GO" id="GO:0005737">
    <property type="term" value="C:cytoplasm"/>
    <property type="evidence" value="ECO:0007669"/>
    <property type="project" value="UniProtKB-SubCell"/>
</dbReference>
<dbReference type="GO" id="GO:0003700">
    <property type="term" value="F:DNA-binding transcription factor activity"/>
    <property type="evidence" value="ECO:0007669"/>
    <property type="project" value="InterPro"/>
</dbReference>
<dbReference type="GO" id="GO:0043565">
    <property type="term" value="F:sequence-specific DNA binding"/>
    <property type="evidence" value="ECO:0007669"/>
    <property type="project" value="InterPro"/>
</dbReference>
<dbReference type="GO" id="GO:0045892">
    <property type="term" value="P:negative regulation of DNA-templated transcription"/>
    <property type="evidence" value="ECO:0007669"/>
    <property type="project" value="UniProtKB-UniRule"/>
</dbReference>
<dbReference type="FunFam" id="1.10.1270.10:FF:000001">
    <property type="entry name" value="Trp operon repressor"/>
    <property type="match status" value="1"/>
</dbReference>
<dbReference type="Gene3D" id="1.10.1270.10">
    <property type="entry name" value="TrpR-like"/>
    <property type="match status" value="1"/>
</dbReference>
<dbReference type="HAMAP" id="MF_00475">
    <property type="entry name" value="Trp_repressor"/>
    <property type="match status" value="1"/>
</dbReference>
<dbReference type="InterPro" id="IPR000831">
    <property type="entry name" value="Trp_repress"/>
</dbReference>
<dbReference type="InterPro" id="IPR013335">
    <property type="entry name" value="Trp_repress_bac"/>
</dbReference>
<dbReference type="InterPro" id="IPR010921">
    <property type="entry name" value="Trp_repressor/repl_initiator"/>
</dbReference>
<dbReference type="InterPro" id="IPR038116">
    <property type="entry name" value="TrpR-like_sf"/>
</dbReference>
<dbReference type="NCBIfam" id="TIGR01321">
    <property type="entry name" value="TrpR"/>
    <property type="match status" value="1"/>
</dbReference>
<dbReference type="PANTHER" id="PTHR38025">
    <property type="entry name" value="TRP OPERON REPRESSOR"/>
    <property type="match status" value="1"/>
</dbReference>
<dbReference type="PANTHER" id="PTHR38025:SF1">
    <property type="entry name" value="TRP OPERON REPRESSOR"/>
    <property type="match status" value="1"/>
</dbReference>
<dbReference type="Pfam" id="PF01371">
    <property type="entry name" value="Trp_repressor"/>
    <property type="match status" value="1"/>
</dbReference>
<dbReference type="PIRSF" id="PIRSF003196">
    <property type="entry name" value="Trp_repressor"/>
    <property type="match status" value="1"/>
</dbReference>
<dbReference type="SUPFAM" id="SSF48295">
    <property type="entry name" value="TrpR-like"/>
    <property type="match status" value="1"/>
</dbReference>